<feature type="chain" id="PRO_1000188689" description="Ribosomal RNA small subunit methyltransferase B">
    <location>
        <begin position="1"/>
        <end position="429"/>
    </location>
</feature>
<feature type="active site" description="Nucleophile" evidence="1">
    <location>
        <position position="375"/>
    </location>
</feature>
<feature type="binding site" evidence="1">
    <location>
        <begin position="254"/>
        <end position="260"/>
    </location>
    <ligand>
        <name>S-adenosyl-L-methionine</name>
        <dbReference type="ChEBI" id="CHEBI:59789"/>
    </ligand>
</feature>
<feature type="binding site" evidence="1">
    <location>
        <position position="277"/>
    </location>
    <ligand>
        <name>S-adenosyl-L-methionine</name>
        <dbReference type="ChEBI" id="CHEBI:59789"/>
    </ligand>
</feature>
<feature type="binding site" evidence="1">
    <location>
        <position position="303"/>
    </location>
    <ligand>
        <name>S-adenosyl-L-methionine</name>
        <dbReference type="ChEBI" id="CHEBI:59789"/>
    </ligand>
</feature>
<feature type="binding site" evidence="1">
    <location>
        <position position="322"/>
    </location>
    <ligand>
        <name>S-adenosyl-L-methionine</name>
        <dbReference type="ChEBI" id="CHEBI:59789"/>
    </ligand>
</feature>
<dbReference type="EC" id="2.1.1.176" evidence="1"/>
<dbReference type="EMBL" id="CU928161">
    <property type="protein sequence ID" value="CAR04893.1"/>
    <property type="molecule type" value="Genomic_DNA"/>
</dbReference>
<dbReference type="RefSeq" id="WP_000744766.1">
    <property type="nucleotide sequence ID" value="NC_011742.1"/>
</dbReference>
<dbReference type="SMR" id="B7MCQ4"/>
<dbReference type="KEGG" id="ecz:ECS88_3676"/>
<dbReference type="HOGENOM" id="CLU_005316_0_4_6"/>
<dbReference type="Proteomes" id="UP000000747">
    <property type="component" value="Chromosome"/>
</dbReference>
<dbReference type="GO" id="GO:0005829">
    <property type="term" value="C:cytosol"/>
    <property type="evidence" value="ECO:0007669"/>
    <property type="project" value="TreeGrafter"/>
</dbReference>
<dbReference type="GO" id="GO:0003723">
    <property type="term" value="F:RNA binding"/>
    <property type="evidence" value="ECO:0007669"/>
    <property type="project" value="UniProtKB-KW"/>
</dbReference>
<dbReference type="GO" id="GO:0009383">
    <property type="term" value="F:rRNA (cytosine-C5-)-methyltransferase activity"/>
    <property type="evidence" value="ECO:0007669"/>
    <property type="project" value="TreeGrafter"/>
</dbReference>
<dbReference type="GO" id="GO:0006355">
    <property type="term" value="P:regulation of DNA-templated transcription"/>
    <property type="evidence" value="ECO:0007669"/>
    <property type="project" value="InterPro"/>
</dbReference>
<dbReference type="GO" id="GO:0070475">
    <property type="term" value="P:rRNA base methylation"/>
    <property type="evidence" value="ECO:0007669"/>
    <property type="project" value="TreeGrafter"/>
</dbReference>
<dbReference type="CDD" id="cd02440">
    <property type="entry name" value="AdoMet_MTases"/>
    <property type="match status" value="1"/>
</dbReference>
<dbReference type="CDD" id="cd00620">
    <property type="entry name" value="Methyltransferase_Sun"/>
    <property type="match status" value="1"/>
</dbReference>
<dbReference type="FunFam" id="1.10.287.730:FF:000001">
    <property type="entry name" value="Ribosomal RNA small subunit methyltransferase B"/>
    <property type="match status" value="1"/>
</dbReference>
<dbReference type="FunFam" id="1.10.940.10:FF:000002">
    <property type="entry name" value="Ribosomal RNA small subunit methyltransferase B"/>
    <property type="match status" value="1"/>
</dbReference>
<dbReference type="FunFam" id="3.30.70.1170:FF:000002">
    <property type="entry name" value="Ribosomal RNA small subunit methyltransferase B"/>
    <property type="match status" value="1"/>
</dbReference>
<dbReference type="FunFam" id="3.40.50.150:FF:000022">
    <property type="entry name" value="Ribosomal RNA small subunit methyltransferase B"/>
    <property type="match status" value="1"/>
</dbReference>
<dbReference type="Gene3D" id="1.10.287.730">
    <property type="entry name" value="Helix hairpin bin"/>
    <property type="match status" value="1"/>
</dbReference>
<dbReference type="Gene3D" id="1.10.940.10">
    <property type="entry name" value="NusB-like"/>
    <property type="match status" value="1"/>
</dbReference>
<dbReference type="Gene3D" id="3.30.70.1170">
    <property type="entry name" value="Sun protein, domain 3"/>
    <property type="match status" value="1"/>
</dbReference>
<dbReference type="Gene3D" id="3.40.50.150">
    <property type="entry name" value="Vaccinia Virus protein VP39"/>
    <property type="match status" value="1"/>
</dbReference>
<dbReference type="HAMAP" id="MF_01856">
    <property type="entry name" value="16SrRNA_methyltr_B"/>
    <property type="match status" value="1"/>
</dbReference>
<dbReference type="InterPro" id="IPR049560">
    <property type="entry name" value="MeTrfase_RsmB-F_NOP2_cat"/>
</dbReference>
<dbReference type="InterPro" id="IPR001678">
    <property type="entry name" value="MeTrfase_RsmB-F_NOP2_dom"/>
</dbReference>
<dbReference type="InterPro" id="IPR035926">
    <property type="entry name" value="NusB-like_sf"/>
</dbReference>
<dbReference type="InterPro" id="IPR006027">
    <property type="entry name" value="NusB_RsmB_TIM44"/>
</dbReference>
<dbReference type="InterPro" id="IPR023267">
    <property type="entry name" value="RCMT"/>
</dbReference>
<dbReference type="InterPro" id="IPR004573">
    <property type="entry name" value="rRNA_ssu_MeTfrase_B"/>
</dbReference>
<dbReference type="InterPro" id="IPR023541">
    <property type="entry name" value="rRNA_ssu_MeTfrase_B_ent"/>
</dbReference>
<dbReference type="InterPro" id="IPR054728">
    <property type="entry name" value="RsmB-like_ferredoxin"/>
</dbReference>
<dbReference type="InterPro" id="IPR048019">
    <property type="entry name" value="RsmB-like_N"/>
</dbReference>
<dbReference type="InterPro" id="IPR018314">
    <property type="entry name" value="RsmB/NOL1/NOP2-like_CS"/>
</dbReference>
<dbReference type="InterPro" id="IPR029063">
    <property type="entry name" value="SAM-dependent_MTases_sf"/>
</dbReference>
<dbReference type="NCBIfam" id="NF008149">
    <property type="entry name" value="PRK10901.1"/>
    <property type="match status" value="1"/>
</dbReference>
<dbReference type="NCBIfam" id="NF011494">
    <property type="entry name" value="PRK14902.1"/>
    <property type="match status" value="1"/>
</dbReference>
<dbReference type="NCBIfam" id="TIGR00563">
    <property type="entry name" value="rsmB"/>
    <property type="match status" value="1"/>
</dbReference>
<dbReference type="PANTHER" id="PTHR22807:SF61">
    <property type="entry name" value="NOL1_NOP2_SUN FAMILY PROTEIN _ ANTITERMINATION NUSB DOMAIN-CONTAINING PROTEIN"/>
    <property type="match status" value="1"/>
</dbReference>
<dbReference type="PANTHER" id="PTHR22807">
    <property type="entry name" value="NOP2 YEAST -RELATED NOL1/NOP2/FMU SUN DOMAIN-CONTAINING"/>
    <property type="match status" value="1"/>
</dbReference>
<dbReference type="Pfam" id="PF01189">
    <property type="entry name" value="Methyltr_RsmB-F"/>
    <property type="match status" value="1"/>
</dbReference>
<dbReference type="Pfam" id="PF01029">
    <property type="entry name" value="NusB"/>
    <property type="match status" value="1"/>
</dbReference>
<dbReference type="Pfam" id="PF22458">
    <property type="entry name" value="RsmF-B_ferredox"/>
    <property type="match status" value="1"/>
</dbReference>
<dbReference type="PRINTS" id="PR02008">
    <property type="entry name" value="RCMTFAMILY"/>
</dbReference>
<dbReference type="SUPFAM" id="SSF48013">
    <property type="entry name" value="NusB-like"/>
    <property type="match status" value="1"/>
</dbReference>
<dbReference type="SUPFAM" id="SSF53335">
    <property type="entry name" value="S-adenosyl-L-methionine-dependent methyltransferases"/>
    <property type="match status" value="1"/>
</dbReference>
<dbReference type="PROSITE" id="PS01153">
    <property type="entry name" value="NOL1_NOP2_SUN"/>
    <property type="match status" value="1"/>
</dbReference>
<dbReference type="PROSITE" id="PS51686">
    <property type="entry name" value="SAM_MT_RSMB_NOP"/>
    <property type="match status" value="1"/>
</dbReference>
<comment type="function">
    <text evidence="1">Specifically methylates the cytosine at position 967 (m5C967) of 16S rRNA.</text>
</comment>
<comment type="catalytic activity">
    <reaction evidence="1">
        <text>cytidine(967) in 16S rRNA + S-adenosyl-L-methionine = 5-methylcytidine(967) in 16S rRNA + S-adenosyl-L-homocysteine + H(+)</text>
        <dbReference type="Rhea" id="RHEA:42748"/>
        <dbReference type="Rhea" id="RHEA-COMP:10219"/>
        <dbReference type="Rhea" id="RHEA-COMP:10220"/>
        <dbReference type="ChEBI" id="CHEBI:15378"/>
        <dbReference type="ChEBI" id="CHEBI:57856"/>
        <dbReference type="ChEBI" id="CHEBI:59789"/>
        <dbReference type="ChEBI" id="CHEBI:74483"/>
        <dbReference type="ChEBI" id="CHEBI:82748"/>
        <dbReference type="EC" id="2.1.1.176"/>
    </reaction>
</comment>
<comment type="subcellular location">
    <subcellularLocation>
        <location evidence="1">Cytoplasm</location>
    </subcellularLocation>
</comment>
<comment type="similarity">
    <text evidence="1">Belongs to the class I-like SAM-binding methyltransferase superfamily. RsmB/NOP family.</text>
</comment>
<sequence length="429" mass="48327">MKKQRNLRSMAAQAIEQVVEQGQSLSNILPPLQQKVSDKDKALLQELCFGVLRTLSQLDWLINKLMARPMTGKQRTVHYLIMVGLYQLLYTRIPPHAALAETVEGAVAIKRPQLKGLINGVLRQFQRQQDELLAEFNASDARYLHPSWLLKRLQKAYPEQWQSIVEANNQRPPMWLRVNRTHHSRDSWLALLDEAGMKGFPHADYPDAVQLETPAPVHALPGFEEGWVTVQDASAQGCMTWLAPQNGEHILDLCAAPGGKTTHILEVAPEAQVLAVDIDEQRLSRVYDNLKRLGMKATVKQGDGRYPSQWCGEQQFDRILLDAPCSATGVIRRHPDIKWLRRDRDIPELAQLQSEILDAIWSHLKSGGTLVYATCSMLPEENSLQIKAFLQRTADAELCETGTPEQPGKQNLPGAEEGDGFFYAKLIKK</sequence>
<protein>
    <recommendedName>
        <fullName evidence="1">Ribosomal RNA small subunit methyltransferase B</fullName>
        <ecNumber evidence="1">2.1.1.176</ecNumber>
    </recommendedName>
    <alternativeName>
        <fullName evidence="1">16S rRNA m5C967 methyltransferase</fullName>
    </alternativeName>
    <alternativeName>
        <fullName evidence="1">rRNA (cytosine-C(5)-)-methyltransferase RsmB</fullName>
    </alternativeName>
</protein>
<accession>B7MCQ4</accession>
<organism>
    <name type="scientific">Escherichia coli O45:K1 (strain S88 / ExPEC)</name>
    <dbReference type="NCBI Taxonomy" id="585035"/>
    <lineage>
        <taxon>Bacteria</taxon>
        <taxon>Pseudomonadati</taxon>
        <taxon>Pseudomonadota</taxon>
        <taxon>Gammaproteobacteria</taxon>
        <taxon>Enterobacterales</taxon>
        <taxon>Enterobacteriaceae</taxon>
        <taxon>Escherichia</taxon>
    </lineage>
</organism>
<proteinExistence type="inferred from homology"/>
<reference key="1">
    <citation type="journal article" date="2009" name="PLoS Genet.">
        <title>Organised genome dynamics in the Escherichia coli species results in highly diverse adaptive paths.</title>
        <authorList>
            <person name="Touchon M."/>
            <person name="Hoede C."/>
            <person name="Tenaillon O."/>
            <person name="Barbe V."/>
            <person name="Baeriswyl S."/>
            <person name="Bidet P."/>
            <person name="Bingen E."/>
            <person name="Bonacorsi S."/>
            <person name="Bouchier C."/>
            <person name="Bouvet O."/>
            <person name="Calteau A."/>
            <person name="Chiapello H."/>
            <person name="Clermont O."/>
            <person name="Cruveiller S."/>
            <person name="Danchin A."/>
            <person name="Diard M."/>
            <person name="Dossat C."/>
            <person name="Karoui M.E."/>
            <person name="Frapy E."/>
            <person name="Garry L."/>
            <person name="Ghigo J.M."/>
            <person name="Gilles A.M."/>
            <person name="Johnson J."/>
            <person name="Le Bouguenec C."/>
            <person name="Lescat M."/>
            <person name="Mangenot S."/>
            <person name="Martinez-Jehanne V."/>
            <person name="Matic I."/>
            <person name="Nassif X."/>
            <person name="Oztas S."/>
            <person name="Petit M.A."/>
            <person name="Pichon C."/>
            <person name="Rouy Z."/>
            <person name="Ruf C.S."/>
            <person name="Schneider D."/>
            <person name="Tourret J."/>
            <person name="Vacherie B."/>
            <person name="Vallenet D."/>
            <person name="Medigue C."/>
            <person name="Rocha E.P.C."/>
            <person name="Denamur E."/>
        </authorList>
    </citation>
    <scope>NUCLEOTIDE SEQUENCE [LARGE SCALE GENOMIC DNA]</scope>
    <source>
        <strain>S88 / ExPEC</strain>
    </source>
</reference>
<keyword id="KW-0963">Cytoplasm</keyword>
<keyword id="KW-0489">Methyltransferase</keyword>
<keyword id="KW-1185">Reference proteome</keyword>
<keyword id="KW-0694">RNA-binding</keyword>
<keyword id="KW-0698">rRNA processing</keyword>
<keyword id="KW-0949">S-adenosyl-L-methionine</keyword>
<keyword id="KW-0808">Transferase</keyword>
<gene>
    <name evidence="1" type="primary">rsmB</name>
    <name evidence="1" type="synonym">sun</name>
    <name type="ordered locus">ECS88_3676</name>
</gene>
<name>RSMB_ECO45</name>
<evidence type="ECO:0000255" key="1">
    <source>
        <dbReference type="HAMAP-Rule" id="MF_01856"/>
    </source>
</evidence>